<feature type="chain" id="PRO_0000359987" description="Fructose-1,6-bisphosphatase class 3">
    <location>
        <begin position="1"/>
        <end position="654"/>
    </location>
</feature>
<feature type="region of interest" description="Disordered" evidence="2">
    <location>
        <begin position="288"/>
        <end position="307"/>
    </location>
</feature>
<feature type="compositionally biased region" description="Basic and acidic residues" evidence="2">
    <location>
        <begin position="298"/>
        <end position="307"/>
    </location>
</feature>
<dbReference type="EC" id="3.1.3.11" evidence="1"/>
<dbReference type="EMBL" id="BX571857">
    <property type="protein sequence ID" value="CAG44216.1"/>
    <property type="molecule type" value="Genomic_DNA"/>
</dbReference>
<dbReference type="RefSeq" id="WP_000192173.1">
    <property type="nucleotide sequence ID" value="NC_002953.3"/>
</dbReference>
<dbReference type="KEGG" id="sas:SAS2401"/>
<dbReference type="HOGENOM" id="CLU_028392_2_0_9"/>
<dbReference type="UniPathway" id="UPA00138"/>
<dbReference type="GO" id="GO:0042132">
    <property type="term" value="F:fructose 1,6-bisphosphate 1-phosphatase activity"/>
    <property type="evidence" value="ECO:0007669"/>
    <property type="project" value="UniProtKB-UniRule"/>
</dbReference>
<dbReference type="GO" id="GO:0006094">
    <property type="term" value="P:gluconeogenesis"/>
    <property type="evidence" value="ECO:0007669"/>
    <property type="project" value="UniProtKB-UniRule"/>
</dbReference>
<dbReference type="Gene3D" id="3.60.21.10">
    <property type="match status" value="1"/>
</dbReference>
<dbReference type="HAMAP" id="MF_01854">
    <property type="entry name" value="FBPase_class3"/>
    <property type="match status" value="1"/>
</dbReference>
<dbReference type="InterPro" id="IPR009164">
    <property type="entry name" value="FBPtase_class3"/>
</dbReference>
<dbReference type="InterPro" id="IPR029052">
    <property type="entry name" value="Metallo-depent_PP-like"/>
</dbReference>
<dbReference type="Pfam" id="PF06874">
    <property type="entry name" value="FBPase_2"/>
    <property type="match status" value="1"/>
</dbReference>
<dbReference type="PIRSF" id="PIRSF000906">
    <property type="entry name" value="FBPtase_Bacill"/>
    <property type="match status" value="1"/>
</dbReference>
<dbReference type="SUPFAM" id="SSF56300">
    <property type="entry name" value="Metallo-dependent phosphatases"/>
    <property type="match status" value="2"/>
</dbReference>
<gene>
    <name evidence="1" type="primary">fbp</name>
    <name type="ordered locus">SAS2401</name>
</gene>
<organism>
    <name type="scientific">Staphylococcus aureus (strain MSSA476)</name>
    <dbReference type="NCBI Taxonomy" id="282459"/>
    <lineage>
        <taxon>Bacteria</taxon>
        <taxon>Bacillati</taxon>
        <taxon>Bacillota</taxon>
        <taxon>Bacilli</taxon>
        <taxon>Bacillales</taxon>
        <taxon>Staphylococcaceae</taxon>
        <taxon>Staphylococcus</taxon>
    </lineage>
</organism>
<accession>Q6G6F9</accession>
<reference key="1">
    <citation type="journal article" date="2004" name="Proc. Natl. Acad. Sci. U.S.A.">
        <title>Complete genomes of two clinical Staphylococcus aureus strains: evidence for the rapid evolution of virulence and drug resistance.</title>
        <authorList>
            <person name="Holden M.T.G."/>
            <person name="Feil E.J."/>
            <person name="Lindsay J.A."/>
            <person name="Peacock S.J."/>
            <person name="Day N.P.J."/>
            <person name="Enright M.C."/>
            <person name="Foster T.J."/>
            <person name="Moore C.E."/>
            <person name="Hurst L."/>
            <person name="Atkin R."/>
            <person name="Barron A."/>
            <person name="Bason N."/>
            <person name="Bentley S.D."/>
            <person name="Chillingworth C."/>
            <person name="Chillingworth T."/>
            <person name="Churcher C."/>
            <person name="Clark L."/>
            <person name="Corton C."/>
            <person name="Cronin A."/>
            <person name="Doggett J."/>
            <person name="Dowd L."/>
            <person name="Feltwell T."/>
            <person name="Hance Z."/>
            <person name="Harris B."/>
            <person name="Hauser H."/>
            <person name="Holroyd S."/>
            <person name="Jagels K."/>
            <person name="James K.D."/>
            <person name="Lennard N."/>
            <person name="Line A."/>
            <person name="Mayes R."/>
            <person name="Moule S."/>
            <person name="Mungall K."/>
            <person name="Ormond D."/>
            <person name="Quail M.A."/>
            <person name="Rabbinowitsch E."/>
            <person name="Rutherford K.M."/>
            <person name="Sanders M."/>
            <person name="Sharp S."/>
            <person name="Simmonds M."/>
            <person name="Stevens K."/>
            <person name="Whitehead S."/>
            <person name="Barrell B.G."/>
            <person name="Spratt B.G."/>
            <person name="Parkhill J."/>
        </authorList>
    </citation>
    <scope>NUCLEOTIDE SEQUENCE [LARGE SCALE GENOMIC DNA]</scope>
    <source>
        <strain>MSSA476</strain>
    </source>
</reference>
<protein>
    <recommendedName>
        <fullName evidence="1">Fructose-1,6-bisphosphatase class 3</fullName>
        <shortName evidence="1">FBPase class 3</shortName>
        <ecNumber evidence="1">3.1.3.11</ecNumber>
    </recommendedName>
    <alternativeName>
        <fullName evidence="1">D-fructose-1,6-bisphosphate 1-phosphohydrolase class 3</fullName>
    </alternativeName>
</protein>
<comment type="catalytic activity">
    <reaction evidence="1">
        <text>beta-D-fructose 1,6-bisphosphate + H2O = beta-D-fructose 6-phosphate + phosphate</text>
        <dbReference type="Rhea" id="RHEA:11064"/>
        <dbReference type="ChEBI" id="CHEBI:15377"/>
        <dbReference type="ChEBI" id="CHEBI:32966"/>
        <dbReference type="ChEBI" id="CHEBI:43474"/>
        <dbReference type="ChEBI" id="CHEBI:57634"/>
        <dbReference type="EC" id="3.1.3.11"/>
    </reaction>
</comment>
<comment type="cofactor">
    <cofactor evidence="1">
        <name>Mn(2+)</name>
        <dbReference type="ChEBI" id="CHEBI:29035"/>
    </cofactor>
</comment>
<comment type="pathway">
    <text evidence="1">Carbohydrate biosynthesis; gluconeogenesis.</text>
</comment>
<comment type="similarity">
    <text evidence="1">Belongs to the FBPase class 3 family.</text>
</comment>
<keyword id="KW-0119">Carbohydrate metabolism</keyword>
<keyword id="KW-0378">Hydrolase</keyword>
<keyword id="KW-0464">Manganese</keyword>
<sequence length="654" mass="76122">MTQITEKELKKKYLDLLSQNFDTPEKLATEIINLESILELPKGTEHFVSDLHGEYEAFQHVLRNGSGNVRAKINDIFKERLSTKELNDLTALVYYPEDKLKLIKSDFQSCGQLNVWYITTIEHLIELIKYCSSKYTRSKLRKALPKQYVYIIEELLYKSNEYQNKKSYYETLVNQVIELKQADDLIIGLAYSVQRLVVDHLHVVGDIYDRGPQPDKIMDTLINYHSLDIQWGNHDVLWVGAYAGSKVCLANLLRICARYDNLDIIEDAYGINLRPLLTLAEKYYDADNPAFKPKKRPDKHERLTQREESQITKIHQAIAMIQFKLEIPIIKRRPNFEMEERLVLEKVNYDTNEITVYGNTYPLKDTCFQTVNRDNPAELLPEEEEVMNKLLLSFQQSEKLRRHMSFLMRKGSLYLPYNGNLLIHGCIPVDENGEMESFEIDGHTYSGQELLDVFEYHVRKSFDEKENTDDLSTDLVWYLWTGKYSSLFGKRAMTTFERYFIADKASHKEEKNPYYHLREDVNMVRKMLSDFGLNADEGRIINGHTPVKEINGEDPIKADGKMLVIDGGFSKAYQSTTGIAGYTLLYNSFGMQLVAHQQFNAKEKILSEGIDELSIKRVVDKELQRKKIRDTNIGKDLQAQIDILKMLMHDRYLD</sequence>
<evidence type="ECO:0000255" key="1">
    <source>
        <dbReference type="HAMAP-Rule" id="MF_01854"/>
    </source>
</evidence>
<evidence type="ECO:0000256" key="2">
    <source>
        <dbReference type="SAM" id="MobiDB-lite"/>
    </source>
</evidence>
<proteinExistence type="inferred from homology"/>
<name>F16PC_STAAS</name>